<organism>
    <name type="scientific">Zymomonas mobilis subsp. mobilis (strain ATCC 31821 / ZM4 / CP4)</name>
    <dbReference type="NCBI Taxonomy" id="264203"/>
    <lineage>
        <taxon>Bacteria</taxon>
        <taxon>Pseudomonadati</taxon>
        <taxon>Pseudomonadota</taxon>
        <taxon>Alphaproteobacteria</taxon>
        <taxon>Sphingomonadales</taxon>
        <taxon>Zymomonadaceae</taxon>
        <taxon>Zymomonas</taxon>
    </lineage>
</organism>
<name>UBIE_ZYMMO</name>
<accession>Q9X3X2</accession>
<accession>Q5NN98</accession>
<dbReference type="EC" id="2.1.1.163" evidence="1"/>
<dbReference type="EC" id="2.1.1.201" evidence="1"/>
<dbReference type="EMBL" id="AF088896">
    <property type="protein sequence ID" value="AAD21548.1"/>
    <property type="molecule type" value="Genomic_DNA"/>
</dbReference>
<dbReference type="EMBL" id="AE008692">
    <property type="protein sequence ID" value="AAV89812.1"/>
    <property type="molecule type" value="Genomic_DNA"/>
</dbReference>
<dbReference type="RefSeq" id="WP_011241011.1">
    <property type="nucleotide sequence ID" value="NZ_CP035711.1"/>
</dbReference>
<dbReference type="SMR" id="Q9X3X2"/>
<dbReference type="STRING" id="264203.ZMO1188"/>
<dbReference type="KEGG" id="zmo:ZMO1188"/>
<dbReference type="eggNOG" id="COG2226">
    <property type="taxonomic scope" value="Bacteria"/>
</dbReference>
<dbReference type="HOGENOM" id="CLU_037990_0_1_5"/>
<dbReference type="UniPathway" id="UPA00079">
    <property type="reaction ID" value="UER00169"/>
</dbReference>
<dbReference type="UniPathway" id="UPA00232"/>
<dbReference type="Proteomes" id="UP000001173">
    <property type="component" value="Chromosome"/>
</dbReference>
<dbReference type="GO" id="GO:0008425">
    <property type="term" value="F:2-methoxy-6-polyprenyl-1,4-benzoquinol methyltransferase activity"/>
    <property type="evidence" value="ECO:0007669"/>
    <property type="project" value="UniProtKB-UniRule"/>
</dbReference>
<dbReference type="GO" id="GO:0043770">
    <property type="term" value="F:demethylmenaquinone methyltransferase activity"/>
    <property type="evidence" value="ECO:0007669"/>
    <property type="project" value="UniProtKB-UniRule"/>
</dbReference>
<dbReference type="GO" id="GO:0009060">
    <property type="term" value="P:aerobic respiration"/>
    <property type="evidence" value="ECO:0007669"/>
    <property type="project" value="UniProtKB-UniRule"/>
</dbReference>
<dbReference type="GO" id="GO:0009234">
    <property type="term" value="P:menaquinone biosynthetic process"/>
    <property type="evidence" value="ECO:0007669"/>
    <property type="project" value="UniProtKB-UniRule"/>
</dbReference>
<dbReference type="GO" id="GO:0032259">
    <property type="term" value="P:methylation"/>
    <property type="evidence" value="ECO:0007669"/>
    <property type="project" value="UniProtKB-KW"/>
</dbReference>
<dbReference type="CDD" id="cd02440">
    <property type="entry name" value="AdoMet_MTases"/>
    <property type="match status" value="1"/>
</dbReference>
<dbReference type="Gene3D" id="3.40.50.150">
    <property type="entry name" value="Vaccinia Virus protein VP39"/>
    <property type="match status" value="1"/>
</dbReference>
<dbReference type="HAMAP" id="MF_01813">
    <property type="entry name" value="MenG_UbiE_methyltr"/>
    <property type="match status" value="1"/>
</dbReference>
<dbReference type="InterPro" id="IPR029063">
    <property type="entry name" value="SAM-dependent_MTases_sf"/>
</dbReference>
<dbReference type="InterPro" id="IPR004033">
    <property type="entry name" value="UbiE/COQ5_MeTrFase"/>
</dbReference>
<dbReference type="InterPro" id="IPR023576">
    <property type="entry name" value="UbiE/COQ5_MeTrFase_CS"/>
</dbReference>
<dbReference type="NCBIfam" id="TIGR01934">
    <property type="entry name" value="MenG_MenH_UbiE"/>
    <property type="match status" value="1"/>
</dbReference>
<dbReference type="NCBIfam" id="NF001244">
    <property type="entry name" value="PRK00216.1-5"/>
    <property type="match status" value="1"/>
</dbReference>
<dbReference type="PANTHER" id="PTHR43591:SF24">
    <property type="entry name" value="2-METHOXY-6-POLYPRENYL-1,4-BENZOQUINOL METHYLASE, MITOCHONDRIAL"/>
    <property type="match status" value="1"/>
</dbReference>
<dbReference type="PANTHER" id="PTHR43591">
    <property type="entry name" value="METHYLTRANSFERASE"/>
    <property type="match status" value="1"/>
</dbReference>
<dbReference type="Pfam" id="PF01209">
    <property type="entry name" value="Ubie_methyltran"/>
    <property type="match status" value="1"/>
</dbReference>
<dbReference type="SUPFAM" id="SSF53335">
    <property type="entry name" value="S-adenosyl-L-methionine-dependent methyltransferases"/>
    <property type="match status" value="1"/>
</dbReference>
<dbReference type="PROSITE" id="PS51608">
    <property type="entry name" value="SAM_MT_UBIE"/>
    <property type="match status" value="1"/>
</dbReference>
<dbReference type="PROSITE" id="PS01183">
    <property type="entry name" value="UBIE_1"/>
    <property type="match status" value="1"/>
</dbReference>
<dbReference type="PROSITE" id="PS01184">
    <property type="entry name" value="UBIE_2"/>
    <property type="match status" value="1"/>
</dbReference>
<protein>
    <recommendedName>
        <fullName evidence="1">Ubiquinone/menaquinone biosynthesis C-methyltransferase UbiE</fullName>
        <ecNumber evidence="1">2.1.1.163</ecNumber>
        <ecNumber evidence="1">2.1.1.201</ecNumber>
    </recommendedName>
    <alternativeName>
        <fullName evidence="1">2-methoxy-6-polyprenyl-1,4-benzoquinol methylase</fullName>
    </alternativeName>
    <alternativeName>
        <fullName evidence="1">Demethylmenaquinone methyltransferase</fullName>
    </alternativeName>
</protein>
<proteinExistence type="inferred from homology"/>
<comment type="function">
    <text evidence="1">Methyltransferase required for the conversion of demethylmenaquinol (DMKH2) to menaquinol (MKH2) and the conversion of 2-polyprenyl-6-methoxy-1,4-benzoquinol (DDMQH2) to 2-polyprenyl-3-methyl-6-methoxy-1,4-benzoquinol (DMQH2).</text>
</comment>
<comment type="catalytic activity">
    <reaction evidence="1">
        <text>a 2-demethylmenaquinol + S-adenosyl-L-methionine = a menaquinol + S-adenosyl-L-homocysteine + H(+)</text>
        <dbReference type="Rhea" id="RHEA:42640"/>
        <dbReference type="Rhea" id="RHEA-COMP:9539"/>
        <dbReference type="Rhea" id="RHEA-COMP:9563"/>
        <dbReference type="ChEBI" id="CHEBI:15378"/>
        <dbReference type="ChEBI" id="CHEBI:18151"/>
        <dbReference type="ChEBI" id="CHEBI:55437"/>
        <dbReference type="ChEBI" id="CHEBI:57856"/>
        <dbReference type="ChEBI" id="CHEBI:59789"/>
        <dbReference type="EC" id="2.1.1.163"/>
    </reaction>
</comment>
<comment type="catalytic activity">
    <reaction evidence="1">
        <text>a 2-methoxy-6-(all-trans-polyprenyl)benzene-1,4-diol + S-adenosyl-L-methionine = a 5-methoxy-2-methyl-3-(all-trans-polyprenyl)benzene-1,4-diol + S-adenosyl-L-homocysteine + H(+)</text>
        <dbReference type="Rhea" id="RHEA:28286"/>
        <dbReference type="Rhea" id="RHEA-COMP:10858"/>
        <dbReference type="Rhea" id="RHEA-COMP:10859"/>
        <dbReference type="ChEBI" id="CHEBI:15378"/>
        <dbReference type="ChEBI" id="CHEBI:57856"/>
        <dbReference type="ChEBI" id="CHEBI:59789"/>
        <dbReference type="ChEBI" id="CHEBI:84166"/>
        <dbReference type="ChEBI" id="CHEBI:84167"/>
        <dbReference type="EC" id="2.1.1.201"/>
    </reaction>
</comment>
<comment type="pathway">
    <text evidence="1">Quinol/quinone metabolism; menaquinone biosynthesis; menaquinol from 1,4-dihydroxy-2-naphthoate: step 2/2.</text>
</comment>
<comment type="pathway">
    <text evidence="1">Cofactor biosynthesis; ubiquinone biosynthesis.</text>
</comment>
<comment type="similarity">
    <text evidence="1">Belongs to the class I-like SAM-binding methyltransferase superfamily. MenG/UbiE family.</text>
</comment>
<evidence type="ECO:0000255" key="1">
    <source>
        <dbReference type="HAMAP-Rule" id="MF_01813"/>
    </source>
</evidence>
<evidence type="ECO:0000305" key="2"/>
<gene>
    <name evidence="1" type="primary">ubiE</name>
    <name type="synonym">ubm</name>
    <name type="ordered locus">ZMO1188</name>
</gene>
<reference key="1">
    <citation type="submission" date="1998-08" db="EMBL/GenBank/DDBJ databases">
        <authorList>
            <person name="Lee H.J."/>
            <person name="Kang H.S."/>
        </authorList>
    </citation>
    <scope>NUCLEOTIDE SEQUENCE [GENOMIC DNA]</scope>
    <source>
        <strain>ATCC 31821 / ZM4 / CP4</strain>
    </source>
</reference>
<reference key="2">
    <citation type="journal article" date="2005" name="Nat. Biotechnol.">
        <title>The genome sequence of the ethanologenic bacterium Zymomonas mobilis ZM4.</title>
        <authorList>
            <person name="Seo J.-S."/>
            <person name="Chong H."/>
            <person name="Park H.S."/>
            <person name="Yoon K.-O."/>
            <person name="Jung C."/>
            <person name="Kim J.J."/>
            <person name="Hong J.H."/>
            <person name="Kim H."/>
            <person name="Kim J.-H."/>
            <person name="Kil J.-I."/>
            <person name="Park C.J."/>
            <person name="Oh H.-M."/>
            <person name="Lee J.-S."/>
            <person name="Jin S.-J."/>
            <person name="Um H.-W."/>
            <person name="Lee H.-J."/>
            <person name="Oh S.-J."/>
            <person name="Kim J.Y."/>
            <person name="Kang H.L."/>
            <person name="Lee S.Y."/>
            <person name="Lee K.J."/>
            <person name="Kang H.S."/>
        </authorList>
    </citation>
    <scope>NUCLEOTIDE SEQUENCE [LARGE SCALE GENOMIC DNA]</scope>
    <source>
        <strain>ATCC 31821 / ZM4 / CP4</strain>
    </source>
</reference>
<sequence>MEKVSFGFSDVSPQEKTHLVGDVFRRVASRYDLMNDAMSGGLHRLWKDDFVRLVQPKASEHILDMAGGTGDIAFRLAKYGTNVTIADINPAMLEVGKKRAIARSIENLTWKEENAEALSFNDNVFDAYTIAFGIRNVTHIQKALDEAWRVLKVGGRFFCMEFSQTKWSGFSNLYKMYSTHIVPKIGQLLANDEDSYRYLIESIERFPNIEKFSDMIKSAGFVQIRARPILGGLVAIHSGWKV</sequence>
<feature type="chain" id="PRO_0000193359" description="Ubiquinone/menaquinone biosynthesis C-methyltransferase UbiE">
    <location>
        <begin position="1"/>
        <end position="242"/>
    </location>
</feature>
<feature type="binding site" evidence="1">
    <location>
        <position position="69"/>
    </location>
    <ligand>
        <name>S-adenosyl-L-methionine</name>
        <dbReference type="ChEBI" id="CHEBI:59789"/>
    </ligand>
</feature>
<feature type="binding site" evidence="1">
    <location>
        <position position="87"/>
    </location>
    <ligand>
        <name>S-adenosyl-L-methionine</name>
        <dbReference type="ChEBI" id="CHEBI:59789"/>
    </ligand>
</feature>
<feature type="binding site" evidence="1">
    <location>
        <begin position="114"/>
        <end position="115"/>
    </location>
    <ligand>
        <name>S-adenosyl-L-methionine</name>
        <dbReference type="ChEBI" id="CHEBI:59789"/>
    </ligand>
</feature>
<feature type="sequence conflict" description="In Ref. 1; AAD21548." evidence="2" ref="1">
    <original>R</original>
    <variation>T</variation>
    <location>
        <position position="205"/>
    </location>
</feature>
<keyword id="KW-0474">Menaquinone biosynthesis</keyword>
<keyword id="KW-0489">Methyltransferase</keyword>
<keyword id="KW-1185">Reference proteome</keyword>
<keyword id="KW-0949">S-adenosyl-L-methionine</keyword>
<keyword id="KW-0808">Transferase</keyword>
<keyword id="KW-0831">Ubiquinone biosynthesis</keyword>